<sequence length="99" mass="11354">MALTKAEMSEYLFDKLGLSKRDAKELVELFFEEIRRALENGEQVKLSGFGNFDLRDKNQRPGRNPKTGEDIPITARRVVTFRPGQKLKSRVENASPKDE</sequence>
<organism>
    <name type="scientific">Escherichia fergusonii (strain ATCC 35469 / DSM 13698 / CCUG 18766 / IAM 14443 / JCM 21226 / LMG 7866 / NBRC 102419 / NCTC 12128 / CDC 0568-73)</name>
    <dbReference type="NCBI Taxonomy" id="585054"/>
    <lineage>
        <taxon>Bacteria</taxon>
        <taxon>Pseudomonadati</taxon>
        <taxon>Pseudomonadota</taxon>
        <taxon>Gammaproteobacteria</taxon>
        <taxon>Enterobacterales</taxon>
        <taxon>Enterobacteriaceae</taxon>
        <taxon>Escherichia</taxon>
    </lineage>
</organism>
<reference key="1">
    <citation type="journal article" date="2009" name="PLoS Genet.">
        <title>Organised genome dynamics in the Escherichia coli species results in highly diverse adaptive paths.</title>
        <authorList>
            <person name="Touchon M."/>
            <person name="Hoede C."/>
            <person name="Tenaillon O."/>
            <person name="Barbe V."/>
            <person name="Baeriswyl S."/>
            <person name="Bidet P."/>
            <person name="Bingen E."/>
            <person name="Bonacorsi S."/>
            <person name="Bouchier C."/>
            <person name="Bouvet O."/>
            <person name="Calteau A."/>
            <person name="Chiapello H."/>
            <person name="Clermont O."/>
            <person name="Cruveiller S."/>
            <person name="Danchin A."/>
            <person name="Diard M."/>
            <person name="Dossat C."/>
            <person name="Karoui M.E."/>
            <person name="Frapy E."/>
            <person name="Garry L."/>
            <person name="Ghigo J.M."/>
            <person name="Gilles A.M."/>
            <person name="Johnson J."/>
            <person name="Le Bouguenec C."/>
            <person name="Lescat M."/>
            <person name="Mangenot S."/>
            <person name="Martinez-Jehanne V."/>
            <person name="Matic I."/>
            <person name="Nassif X."/>
            <person name="Oztas S."/>
            <person name="Petit M.A."/>
            <person name="Pichon C."/>
            <person name="Rouy Z."/>
            <person name="Ruf C.S."/>
            <person name="Schneider D."/>
            <person name="Tourret J."/>
            <person name="Vacherie B."/>
            <person name="Vallenet D."/>
            <person name="Medigue C."/>
            <person name="Rocha E.P.C."/>
            <person name="Denamur E."/>
        </authorList>
    </citation>
    <scope>NUCLEOTIDE SEQUENCE [LARGE SCALE GENOMIC DNA]</scope>
    <source>
        <strain>ATCC 35469 / DSM 13698 / BCRC 15582 / CCUG 18766 / IAM 14443 / JCM 21226 / LMG 7866 / NBRC 102419 / NCTC 12128 / CDC 0568-73</strain>
    </source>
</reference>
<name>IHFA_ESCF3</name>
<protein>
    <recommendedName>
        <fullName evidence="1">Integration host factor subunit alpha</fullName>
        <shortName evidence="1">IHF-alpha</shortName>
    </recommendedName>
</protein>
<dbReference type="EMBL" id="CU928158">
    <property type="protein sequence ID" value="CAQ88874.1"/>
    <property type="molecule type" value="Genomic_DNA"/>
</dbReference>
<dbReference type="RefSeq" id="WP_001229265.1">
    <property type="nucleotide sequence ID" value="NC_011740.1"/>
</dbReference>
<dbReference type="SMR" id="B7LQ77"/>
<dbReference type="GeneID" id="93775925"/>
<dbReference type="KEGG" id="efe:EFER_1353"/>
<dbReference type="HOGENOM" id="CLU_105066_1_3_6"/>
<dbReference type="OrthoDB" id="9797747at2"/>
<dbReference type="Proteomes" id="UP000000745">
    <property type="component" value="Chromosome"/>
</dbReference>
<dbReference type="GO" id="GO:0005829">
    <property type="term" value="C:cytosol"/>
    <property type="evidence" value="ECO:0007669"/>
    <property type="project" value="TreeGrafter"/>
</dbReference>
<dbReference type="GO" id="GO:0003677">
    <property type="term" value="F:DNA binding"/>
    <property type="evidence" value="ECO:0007669"/>
    <property type="project" value="UniProtKB-UniRule"/>
</dbReference>
<dbReference type="GO" id="GO:0030527">
    <property type="term" value="F:structural constituent of chromatin"/>
    <property type="evidence" value="ECO:0007669"/>
    <property type="project" value="InterPro"/>
</dbReference>
<dbReference type="GO" id="GO:0006310">
    <property type="term" value="P:DNA recombination"/>
    <property type="evidence" value="ECO:0007669"/>
    <property type="project" value="UniProtKB-UniRule"/>
</dbReference>
<dbReference type="GO" id="GO:0009893">
    <property type="term" value="P:positive regulation of metabolic process"/>
    <property type="evidence" value="ECO:0007669"/>
    <property type="project" value="UniProtKB-ARBA"/>
</dbReference>
<dbReference type="GO" id="GO:0006355">
    <property type="term" value="P:regulation of DNA-templated transcription"/>
    <property type="evidence" value="ECO:0007669"/>
    <property type="project" value="UniProtKB-UniRule"/>
</dbReference>
<dbReference type="GO" id="GO:0006417">
    <property type="term" value="P:regulation of translation"/>
    <property type="evidence" value="ECO:0007669"/>
    <property type="project" value="UniProtKB-UniRule"/>
</dbReference>
<dbReference type="CDD" id="cd13835">
    <property type="entry name" value="IHF_A"/>
    <property type="match status" value="1"/>
</dbReference>
<dbReference type="FunFam" id="4.10.520.10:FF:000002">
    <property type="entry name" value="Integration host factor subunit alpha"/>
    <property type="match status" value="1"/>
</dbReference>
<dbReference type="Gene3D" id="4.10.520.10">
    <property type="entry name" value="IHF-like DNA-binding proteins"/>
    <property type="match status" value="1"/>
</dbReference>
<dbReference type="HAMAP" id="MF_00380">
    <property type="entry name" value="IHF_alpha"/>
    <property type="match status" value="1"/>
</dbReference>
<dbReference type="InterPro" id="IPR000119">
    <property type="entry name" value="Hist_DNA-bd"/>
</dbReference>
<dbReference type="InterPro" id="IPR020816">
    <property type="entry name" value="Histone-like_DNA-bd_CS"/>
</dbReference>
<dbReference type="InterPro" id="IPR010992">
    <property type="entry name" value="IHF-like_DNA-bd_dom_sf"/>
</dbReference>
<dbReference type="InterPro" id="IPR005684">
    <property type="entry name" value="IHF_alpha"/>
</dbReference>
<dbReference type="NCBIfam" id="TIGR00987">
    <property type="entry name" value="himA"/>
    <property type="match status" value="1"/>
</dbReference>
<dbReference type="NCBIfam" id="NF001401">
    <property type="entry name" value="PRK00285.1"/>
    <property type="match status" value="1"/>
</dbReference>
<dbReference type="PANTHER" id="PTHR33175">
    <property type="entry name" value="DNA-BINDING PROTEIN HU"/>
    <property type="match status" value="1"/>
</dbReference>
<dbReference type="PANTHER" id="PTHR33175:SF2">
    <property type="entry name" value="INTEGRATION HOST FACTOR SUBUNIT ALPHA"/>
    <property type="match status" value="1"/>
</dbReference>
<dbReference type="Pfam" id="PF00216">
    <property type="entry name" value="Bac_DNA_binding"/>
    <property type="match status" value="1"/>
</dbReference>
<dbReference type="PRINTS" id="PR01727">
    <property type="entry name" value="DNABINDINGHU"/>
</dbReference>
<dbReference type="SMART" id="SM00411">
    <property type="entry name" value="BHL"/>
    <property type="match status" value="1"/>
</dbReference>
<dbReference type="SUPFAM" id="SSF47729">
    <property type="entry name" value="IHF-like DNA-binding proteins"/>
    <property type="match status" value="1"/>
</dbReference>
<dbReference type="PROSITE" id="PS00045">
    <property type="entry name" value="HISTONE_LIKE"/>
    <property type="match status" value="1"/>
</dbReference>
<evidence type="ECO:0000255" key="1">
    <source>
        <dbReference type="HAMAP-Rule" id="MF_00380"/>
    </source>
</evidence>
<evidence type="ECO:0000256" key="2">
    <source>
        <dbReference type="SAM" id="MobiDB-lite"/>
    </source>
</evidence>
<keyword id="KW-0233">DNA recombination</keyword>
<keyword id="KW-0238">DNA-binding</keyword>
<keyword id="KW-0804">Transcription</keyword>
<keyword id="KW-0805">Transcription regulation</keyword>
<keyword id="KW-0810">Translation regulation</keyword>
<feature type="chain" id="PRO_1000122143" description="Integration host factor subunit alpha">
    <location>
        <begin position="1"/>
        <end position="99"/>
    </location>
</feature>
<feature type="region of interest" description="Disordered" evidence="2">
    <location>
        <begin position="49"/>
        <end position="73"/>
    </location>
</feature>
<comment type="function">
    <text evidence="1">This protein is one of the two subunits of integration host factor, a specific DNA-binding protein that functions in genetic recombination as well as in transcriptional and translational control.</text>
</comment>
<comment type="subunit">
    <text evidence="1">Heterodimer of an alpha and a beta chain.</text>
</comment>
<comment type="similarity">
    <text evidence="1">Belongs to the bacterial histone-like protein family.</text>
</comment>
<gene>
    <name evidence="1" type="primary">ihfA</name>
    <name evidence="1" type="synonym">himA</name>
    <name type="ordered locus">EFER_1353</name>
</gene>
<accession>B7LQ77</accession>
<proteinExistence type="inferred from homology"/>